<keyword id="KW-0012">Acyltransferase</keyword>
<keyword id="KW-0963">Cytoplasm</keyword>
<keyword id="KW-0441">Lipid A biosynthesis</keyword>
<keyword id="KW-0444">Lipid biosynthesis</keyword>
<keyword id="KW-0443">Lipid metabolism</keyword>
<keyword id="KW-1185">Reference proteome</keyword>
<keyword id="KW-0677">Repeat</keyword>
<keyword id="KW-0808">Transferase</keyword>
<dbReference type="EC" id="2.3.1.129" evidence="1"/>
<dbReference type="EMBL" id="CP000872">
    <property type="protein sequence ID" value="ABX62219.1"/>
    <property type="molecule type" value="Genomic_DNA"/>
</dbReference>
<dbReference type="RefSeq" id="WP_002964279.1">
    <property type="nucleotide sequence ID" value="NC_010103.1"/>
</dbReference>
<dbReference type="SMR" id="A9M5G4"/>
<dbReference type="GeneID" id="97533598"/>
<dbReference type="KEGG" id="bcs:BCAN_A1170"/>
<dbReference type="HOGENOM" id="CLU_061249_0_0_5"/>
<dbReference type="PhylomeDB" id="A9M5G4"/>
<dbReference type="UniPathway" id="UPA00359">
    <property type="reaction ID" value="UER00477"/>
</dbReference>
<dbReference type="Proteomes" id="UP000001385">
    <property type="component" value="Chromosome I"/>
</dbReference>
<dbReference type="GO" id="GO:0005737">
    <property type="term" value="C:cytoplasm"/>
    <property type="evidence" value="ECO:0007669"/>
    <property type="project" value="UniProtKB-SubCell"/>
</dbReference>
<dbReference type="GO" id="GO:0016020">
    <property type="term" value="C:membrane"/>
    <property type="evidence" value="ECO:0007669"/>
    <property type="project" value="GOC"/>
</dbReference>
<dbReference type="GO" id="GO:0008780">
    <property type="term" value="F:acyl-[acyl-carrier-protein]-UDP-N-acetylglucosamine O-acyltransferase activity"/>
    <property type="evidence" value="ECO:0007669"/>
    <property type="project" value="UniProtKB-UniRule"/>
</dbReference>
<dbReference type="GO" id="GO:0009245">
    <property type="term" value="P:lipid A biosynthetic process"/>
    <property type="evidence" value="ECO:0007669"/>
    <property type="project" value="UniProtKB-UniRule"/>
</dbReference>
<dbReference type="CDD" id="cd03351">
    <property type="entry name" value="LbH_UDP-GlcNAc_AT"/>
    <property type="match status" value="1"/>
</dbReference>
<dbReference type="Gene3D" id="2.160.10.10">
    <property type="entry name" value="Hexapeptide repeat proteins"/>
    <property type="match status" value="1"/>
</dbReference>
<dbReference type="Gene3D" id="1.20.1180.10">
    <property type="entry name" value="Udp N-acetylglucosamine O-acyltransferase, C-terminal domain"/>
    <property type="match status" value="1"/>
</dbReference>
<dbReference type="HAMAP" id="MF_00387">
    <property type="entry name" value="LpxA"/>
    <property type="match status" value="1"/>
</dbReference>
<dbReference type="InterPro" id="IPR029098">
    <property type="entry name" value="Acetyltransf_C"/>
</dbReference>
<dbReference type="InterPro" id="IPR037157">
    <property type="entry name" value="Acetyltransf_C_sf"/>
</dbReference>
<dbReference type="InterPro" id="IPR001451">
    <property type="entry name" value="Hexapep"/>
</dbReference>
<dbReference type="InterPro" id="IPR018357">
    <property type="entry name" value="Hexapep_transf_CS"/>
</dbReference>
<dbReference type="InterPro" id="IPR010137">
    <property type="entry name" value="Lipid_A_LpxA"/>
</dbReference>
<dbReference type="InterPro" id="IPR011004">
    <property type="entry name" value="Trimer_LpxA-like_sf"/>
</dbReference>
<dbReference type="NCBIfam" id="TIGR01852">
    <property type="entry name" value="lipid_A_lpxA"/>
    <property type="match status" value="1"/>
</dbReference>
<dbReference type="NCBIfam" id="NF003657">
    <property type="entry name" value="PRK05289.1"/>
    <property type="match status" value="1"/>
</dbReference>
<dbReference type="PANTHER" id="PTHR43480">
    <property type="entry name" value="ACYL-[ACYL-CARRIER-PROTEIN]--UDP-N-ACETYLGLUCOSAMINE O-ACYLTRANSFERASE"/>
    <property type="match status" value="1"/>
</dbReference>
<dbReference type="PANTHER" id="PTHR43480:SF1">
    <property type="entry name" value="ACYL-[ACYL-CARRIER-PROTEIN]--UDP-N-ACETYLGLUCOSAMINE O-ACYLTRANSFERASE, MITOCHONDRIAL-RELATED"/>
    <property type="match status" value="1"/>
</dbReference>
<dbReference type="Pfam" id="PF13720">
    <property type="entry name" value="Acetyltransf_11"/>
    <property type="match status" value="1"/>
</dbReference>
<dbReference type="Pfam" id="PF00132">
    <property type="entry name" value="Hexapep"/>
    <property type="match status" value="2"/>
</dbReference>
<dbReference type="PIRSF" id="PIRSF000456">
    <property type="entry name" value="UDP-GlcNAc_acltr"/>
    <property type="match status" value="1"/>
</dbReference>
<dbReference type="SUPFAM" id="SSF51161">
    <property type="entry name" value="Trimeric LpxA-like enzymes"/>
    <property type="match status" value="1"/>
</dbReference>
<dbReference type="PROSITE" id="PS00101">
    <property type="entry name" value="HEXAPEP_TRANSFERASES"/>
    <property type="match status" value="1"/>
</dbReference>
<comment type="function">
    <text evidence="1">Involved in the biosynthesis of lipid A, a phosphorylated glycolipid that anchors the lipopolysaccharide to the outer membrane of the cell.</text>
</comment>
<comment type="catalytic activity">
    <reaction evidence="1">
        <text>a (3R)-hydroxyacyl-[ACP] + UDP-N-acetyl-alpha-D-glucosamine = a UDP-3-O-[(3R)-3-hydroxyacyl]-N-acetyl-alpha-D-glucosamine + holo-[ACP]</text>
        <dbReference type="Rhea" id="RHEA:67812"/>
        <dbReference type="Rhea" id="RHEA-COMP:9685"/>
        <dbReference type="Rhea" id="RHEA-COMP:9945"/>
        <dbReference type="ChEBI" id="CHEBI:57705"/>
        <dbReference type="ChEBI" id="CHEBI:64479"/>
        <dbReference type="ChEBI" id="CHEBI:78827"/>
        <dbReference type="ChEBI" id="CHEBI:173225"/>
        <dbReference type="EC" id="2.3.1.129"/>
    </reaction>
</comment>
<comment type="pathway">
    <text evidence="1">Glycolipid biosynthesis; lipid IV(A) biosynthesis; lipid IV(A) from (3R)-3-hydroxytetradecanoyl-[acyl-carrier-protein] and UDP-N-acetyl-alpha-D-glucosamine: step 1/6.</text>
</comment>
<comment type="subunit">
    <text evidence="1">Homotrimer.</text>
</comment>
<comment type="subcellular location">
    <subcellularLocation>
        <location evidence="1">Cytoplasm</location>
    </subcellularLocation>
</comment>
<comment type="similarity">
    <text evidence="1">Belongs to the transferase hexapeptide repeat family. LpxA subfamily.</text>
</comment>
<evidence type="ECO:0000255" key="1">
    <source>
        <dbReference type="HAMAP-Rule" id="MF_00387"/>
    </source>
</evidence>
<organism>
    <name type="scientific">Brucella canis (strain ATCC 23365 / NCTC 10854 / RM-666)</name>
    <dbReference type="NCBI Taxonomy" id="483179"/>
    <lineage>
        <taxon>Bacteria</taxon>
        <taxon>Pseudomonadati</taxon>
        <taxon>Pseudomonadota</taxon>
        <taxon>Alphaproteobacteria</taxon>
        <taxon>Hyphomicrobiales</taxon>
        <taxon>Brucellaceae</taxon>
        <taxon>Brucella/Ochrobactrum group</taxon>
        <taxon>Brucella</taxon>
    </lineage>
</organism>
<feature type="chain" id="PRO_1000080205" description="Acyl-[acyl-carrier-protein]--UDP-N-acetylglucosamine O-acyltransferase">
    <location>
        <begin position="1"/>
        <end position="278"/>
    </location>
</feature>
<gene>
    <name evidence="1" type="primary">lpxA</name>
    <name type="ordered locus">BCAN_A1170</name>
</gene>
<protein>
    <recommendedName>
        <fullName evidence="1">Acyl-[acyl-carrier-protein]--UDP-N-acetylglucosamine O-acyltransferase</fullName>
        <shortName evidence="1">UDP-N-acetylglucosamine acyltransferase</shortName>
        <ecNumber evidence="1">2.3.1.129</ecNumber>
    </recommendedName>
</protein>
<reference key="1">
    <citation type="submission" date="2007-10" db="EMBL/GenBank/DDBJ databases">
        <title>Brucella canis ATCC 23365 whole genome shotgun sequencing project.</title>
        <authorList>
            <person name="Setubal J.C."/>
            <person name="Bowns C."/>
            <person name="Boyle S."/>
            <person name="Crasta O.R."/>
            <person name="Czar M.J."/>
            <person name="Dharmanolla C."/>
            <person name="Gillespie J.J."/>
            <person name="Kenyon R.W."/>
            <person name="Lu J."/>
            <person name="Mane S."/>
            <person name="Mohapatra S."/>
            <person name="Nagrani S."/>
            <person name="Purkayastha A."/>
            <person name="Rajasimha H.K."/>
            <person name="Shallom J.M."/>
            <person name="Shallom S."/>
            <person name="Shukla M."/>
            <person name="Snyder E.E."/>
            <person name="Sobral B.W."/>
            <person name="Wattam A.R."/>
            <person name="Will R."/>
            <person name="Williams K."/>
            <person name="Yoo H."/>
            <person name="Bruce D."/>
            <person name="Detter C."/>
            <person name="Munk C."/>
            <person name="Brettin T.S."/>
        </authorList>
    </citation>
    <scope>NUCLEOTIDE SEQUENCE [LARGE SCALE GENOMIC DNA]</scope>
    <source>
        <strain>ATCC 23365 / NCTC 10854 / RM-666</strain>
    </source>
</reference>
<accession>A9M5G4</accession>
<proteinExistence type="inferred from homology"/>
<name>LPXA_BRUC2</name>
<sequence length="278" mass="29386">MKETFIHPTALVEPGVELGQGVSVGPFCHVQSGAIIGNDCELMSHVVITGATTLGAGTKVYPHAILGCDPQNNKHKGGPTRLNVGVNCIIREGVTMHKGSDNARGYTSIGDNCSFLAYAHVAHDCDIGDYVTFSNNVMIGGHTSIGHHAILGGGAAVHQFVRVGHHAFIGGLAAVVSDLIPYGMAIGVHAHLGGLNIIGMKRSGMERKEIHNLRHAVRMLFDRTKPIRQRAQDVLAAIPDSPTVSDMISFINVDTKRAYCTPPLDAAHGGAGHDSDED</sequence>